<accession>Q501X2</accession>
<sequence>MAVDGLPITEQWIREKLNLQHRCLADVRSLTLPGTYEGKICHLGTSLKNFVRLKSLDLSYNALVTVQGIEHLELLERLNLYYNRLASLQDIFSLHKLQNLKELDLRLNPVVKKHPHYRLYLVHAIPKLRRLDDCPVRDRERKAALMHFSSEENLDSDYKKQVFIQDTTARSSDLRIKAMQKMVKTLSLLEGNEELALNDSSRKTGKRRSLQTLSVRCENECSPLLAHENPSESDIVYLFNDSDCRRSSKHKQESAPSKSSDYKNDARAGPHRVRFVSPVILRHSSVRGESVFTAHPDSHKQPHSHENDCSSPKWQNQLLDRANLVLHPPRLTYSTAETKDRSTKTLKGTYRKPMELLLSMMEDLWSEKKENQQNRTFLMKMVQILSMMEQEVSGGEQEIQTLKAALKASIAQADVQEKQHQSEIEELTLQQQQAHESIKRLNEQTKSLLEENVSLQKQLIRAEHKLLASRLKNIPHTQDRGVQSVPEEFNTKRDIIADDEDGGVGEQQQSYRSLIARNERLLQQLEEALMSK</sequence>
<comment type="function">
    <text evidence="1">Involved in the recruitment of key centrosomal proteins to the centrosome. Provides centrosomal microtubule-nucleation activity on the gamma-tubulin ring complexes (gamma-TuRCs) and has critical roles in forming a focused bipolar spindle, which is needed for proper tension generation between sister chromatids. Involved in centriole duplication (By similarity).</text>
</comment>
<comment type="subcellular location">
    <subcellularLocation>
        <location evidence="1">Cytoplasm</location>
        <location evidence="1">Cytoskeleton</location>
        <location evidence="1">Microtubule organizing center</location>
        <location evidence="1">Centrosome</location>
    </subcellularLocation>
</comment>
<comment type="similarity">
    <text evidence="4">Belongs to the CEP72 family.</text>
</comment>
<comment type="sequence caution" evidence="4">
    <conflict type="erroneous initiation">
        <sequence resource="EMBL-CDS" id="AAH95832"/>
    </conflict>
</comment>
<evidence type="ECO:0000250" key="1">
    <source>
        <dbReference type="UniProtKB" id="Q9P209"/>
    </source>
</evidence>
<evidence type="ECO:0000255" key="2"/>
<evidence type="ECO:0000256" key="3">
    <source>
        <dbReference type="SAM" id="MobiDB-lite"/>
    </source>
</evidence>
<evidence type="ECO:0000305" key="4"/>
<name>CEP72_DANRE</name>
<dbReference type="EMBL" id="BC095832">
    <property type="protein sequence ID" value="AAH95832.1"/>
    <property type="status" value="ALT_INIT"/>
    <property type="molecule type" value="mRNA"/>
</dbReference>
<dbReference type="SMR" id="Q501X2"/>
<dbReference type="FunCoup" id="Q501X2">
    <property type="interactions" value="600"/>
</dbReference>
<dbReference type="STRING" id="7955.ENSDARP00000139674"/>
<dbReference type="PaxDb" id="7955-ENSDARP00000075142"/>
<dbReference type="AGR" id="ZFIN:ZDB-GENE-101115-1"/>
<dbReference type="ZFIN" id="ZDB-GENE-101115-1">
    <property type="gene designation" value="cep72"/>
</dbReference>
<dbReference type="eggNOG" id="ENOG502QV2Y">
    <property type="taxonomic scope" value="Eukaryota"/>
</dbReference>
<dbReference type="InParanoid" id="Q501X2"/>
<dbReference type="PhylomeDB" id="Q501X2"/>
<dbReference type="PRO" id="PR:Q501X2"/>
<dbReference type="Proteomes" id="UP000000437">
    <property type="component" value="Unplaced"/>
</dbReference>
<dbReference type="GO" id="GO:0005813">
    <property type="term" value="C:centrosome"/>
    <property type="evidence" value="ECO:0000250"/>
    <property type="project" value="UniProtKB"/>
</dbReference>
<dbReference type="GO" id="GO:0005737">
    <property type="term" value="C:cytoplasm"/>
    <property type="evidence" value="ECO:0007669"/>
    <property type="project" value="UniProtKB-KW"/>
</dbReference>
<dbReference type="GO" id="GO:0033566">
    <property type="term" value="P:gamma-tubulin complex localization"/>
    <property type="evidence" value="ECO:0000250"/>
    <property type="project" value="UniProtKB"/>
</dbReference>
<dbReference type="GO" id="GO:0007051">
    <property type="term" value="P:spindle organization"/>
    <property type="evidence" value="ECO:0000250"/>
    <property type="project" value="UniProtKB"/>
</dbReference>
<dbReference type="FunFam" id="3.80.10.10:FF:000489">
    <property type="entry name" value="Centrosomal protein of 72 kDa"/>
    <property type="match status" value="1"/>
</dbReference>
<dbReference type="Gene3D" id="3.80.10.10">
    <property type="entry name" value="Ribonuclease Inhibitor"/>
    <property type="match status" value="1"/>
</dbReference>
<dbReference type="InterPro" id="IPR055320">
    <property type="entry name" value="CEP72-like"/>
</dbReference>
<dbReference type="InterPro" id="IPR001611">
    <property type="entry name" value="Leu-rich_rpt"/>
</dbReference>
<dbReference type="InterPro" id="IPR032675">
    <property type="entry name" value="LRR_dom_sf"/>
</dbReference>
<dbReference type="PANTHER" id="PTHR23311:SF5">
    <property type="entry name" value="CENTROSOMAL PROTEIN OF 72 KDA"/>
    <property type="match status" value="1"/>
</dbReference>
<dbReference type="PANTHER" id="PTHR23311">
    <property type="entry name" value="HEAT SHOCK REGULATED 2"/>
    <property type="match status" value="1"/>
</dbReference>
<dbReference type="Pfam" id="PF14580">
    <property type="entry name" value="LRR_9"/>
    <property type="match status" value="1"/>
</dbReference>
<dbReference type="SUPFAM" id="SSF52058">
    <property type="entry name" value="L domain-like"/>
    <property type="match status" value="1"/>
</dbReference>
<dbReference type="PROSITE" id="PS51450">
    <property type="entry name" value="LRR"/>
    <property type="match status" value="3"/>
</dbReference>
<organism>
    <name type="scientific">Danio rerio</name>
    <name type="common">Zebrafish</name>
    <name type="synonym">Brachydanio rerio</name>
    <dbReference type="NCBI Taxonomy" id="7955"/>
    <lineage>
        <taxon>Eukaryota</taxon>
        <taxon>Metazoa</taxon>
        <taxon>Chordata</taxon>
        <taxon>Craniata</taxon>
        <taxon>Vertebrata</taxon>
        <taxon>Euteleostomi</taxon>
        <taxon>Actinopterygii</taxon>
        <taxon>Neopterygii</taxon>
        <taxon>Teleostei</taxon>
        <taxon>Ostariophysi</taxon>
        <taxon>Cypriniformes</taxon>
        <taxon>Danionidae</taxon>
        <taxon>Danioninae</taxon>
        <taxon>Danio</taxon>
    </lineage>
</organism>
<reference key="1">
    <citation type="submission" date="2005-05" db="EMBL/GenBank/DDBJ databases">
        <authorList>
            <consortium name="NIH - Zebrafish Gene Collection (ZGC) project"/>
        </authorList>
    </citation>
    <scope>NUCLEOTIDE SEQUENCE [LARGE SCALE MRNA]</scope>
    <source>
        <tissue>Olfactory epithelium</tissue>
    </source>
</reference>
<keyword id="KW-0175">Coiled coil</keyword>
<keyword id="KW-0963">Cytoplasm</keyword>
<keyword id="KW-0206">Cytoskeleton</keyword>
<keyword id="KW-0433">Leucine-rich repeat</keyword>
<keyword id="KW-1185">Reference proteome</keyword>
<keyword id="KW-0677">Repeat</keyword>
<feature type="chain" id="PRO_0000381811" description="Centrosomal protein of 72 kDa">
    <location>
        <begin position="1"/>
        <end position="532"/>
    </location>
</feature>
<feature type="repeat" description="LRR 1">
    <location>
        <begin position="52"/>
        <end position="73"/>
    </location>
</feature>
<feature type="repeat" description="LRR 2">
    <location>
        <begin position="74"/>
        <end position="95"/>
    </location>
</feature>
<feature type="domain" description="LRRCT">
    <location>
        <begin position="108"/>
        <end position="147"/>
    </location>
</feature>
<feature type="region of interest" description="Disordered" evidence="3">
    <location>
        <begin position="247"/>
        <end position="268"/>
    </location>
</feature>
<feature type="coiled-coil region" evidence="2">
    <location>
        <begin position="385"/>
        <end position="532"/>
    </location>
</feature>
<protein>
    <recommendedName>
        <fullName>Centrosomal protein of 72 kDa</fullName>
        <shortName>Cep72</shortName>
    </recommendedName>
</protein>
<gene>
    <name type="primary">cep72</name>
</gene>
<proteinExistence type="evidence at transcript level"/>